<comment type="function">
    <text evidence="5 6 7 8 9 10 11 12 13 14 15">Has metalloproteinase activity (PubMed:11967260). Proteolytically cleaves the PGRP-LC receptor; involved in gut-fat body innate immunological communication (GFIC)-mediated activation of the imd/Relish signal transduction pathway (PubMed:22262460, PubMed:31350199). Required for larval tissue histolysis during metamorphosis and is involved in pupal head eversion and fusion of the wing imaginal tissue (PubMed:12530966). Required for growth of the dorsal air sac primordium and development of the dorsal air sacs (PubMed:19751719). Promotes embryonic motor axon fasciculation (PubMed:18045838). Cleaves and activates frac to promote motor axon bundling during outgrowth (PubMed:21471368). Promotes the reshaping of adult sensory neuron dendrites from a radial to lattice-like shape which occurs after eclosion by degrading the basement membrane on which the dendrites grow (PubMed:20412776). Involved in inhibition of follicle stem cell proliferation by cleaving Dlp, inhibiting its interaction with wg and preventing Dlp-mediated spreading of wg to follicle stem cells to enhance their proliferation (PubMed:25267296). Plays a role in wound healing (PubMed:22262460). Involved in fat body dissociation which occurs during metamorphosis by degrading basement membrane components, leading to destruction of cell-basement membrane junctions (PubMed:25520167). Required for posterior follicle cell degradation and ovulation (PubMed:25695427).</text>
</comment>
<comment type="cofactor">
    <cofactor evidence="18">
        <name>Ca(2+)</name>
        <dbReference type="ChEBI" id="CHEBI:29108"/>
    </cofactor>
</comment>
<comment type="cofactor">
    <cofactor evidence="18">
        <name>Zn(2+)</name>
        <dbReference type="ChEBI" id="CHEBI:29105"/>
    </cofactor>
</comment>
<comment type="subcellular location">
    <subcellularLocation>
        <location evidence="5 12">Cell membrane</location>
        <topology evidence="17">Single-pass type I membrane protein</topology>
    </subcellularLocation>
</comment>
<comment type="alternative products">
    <event type="alternative splicing"/>
    <isoform>
        <id>Q8MPP3-1</id>
        <name evidence="22">B</name>
        <sequence type="displayed"/>
    </isoform>
    <isoform>
        <id>Q8MPP3-2</id>
        <name evidence="22">C</name>
        <sequence type="described" ref="VSP_057940"/>
    </isoform>
    <isoform>
        <id>Q8MPP3-3</id>
        <name evidence="22">D</name>
        <sequence type="described" ref="VSP_057941"/>
    </isoform>
</comment>
<comment type="tissue specificity">
    <text evidence="5 6 7 14">Widely expressed during embryogenesis including in the mesoderm, developing gut, central and peripheral nervous systems and imaginal disks (PubMed:12530966). In the embryonic nervous system, expressed in neurons and glia (PubMed:18045838). In third instar larvae, strongly expressed in the morphogenetic furrow of eye imaginal disks and in the optic lobe region of the brain (PubMed:11967260). Expressed in posterior follicle cells in all mature stage 14 follicles but not in earlier follicles and is also expressed in some anterior follicle cells that help form dorsal eggshell structures (PubMed:25695427).</text>
</comment>
<comment type="developmental stage">
    <text evidence="5 6 9">Expressed in embryos beginning at 8-12 hours, in first instar larvae, in pupae and in male and female adults with highest expression in early pupae (PubMed:11967260, PubMed:12530966). In epithelial cells, weakly expressed at late pupal stages with significantly elevated expression at the early adult stage of 0-4 hours after eclosion and levels returning to normal by 3 days after eclosion (PubMed:20412776).</text>
</comment>
<comment type="induction">
    <text evidence="15">In fat body cells induced by sorbitol and galactitol produced by hemocytes in the hemolymph, probably in response to Gram-negative bacterial infection.</text>
</comment>
<comment type="disruption phenotype">
    <text evidence="6 7 15">Defective larval tissue histolysis and epithelial fusion during metamorphosis (PubMed:12530966). Impaired fasciculation of ISNb nerves (PubMed:18045838). Conditional RNAi-mediated knockdown in the fat body reduced the imd/Relish-induced antibacterial response (PubMed:31350199).</text>
</comment>
<comment type="similarity">
    <text evidence="17">Belongs to the peptidase M10A family.</text>
</comment>
<name>D2MP_DROME</name>
<evidence type="ECO:0000255" key="1"/>
<evidence type="ECO:0000255" key="2">
    <source>
        <dbReference type="PROSITE-ProRule" id="PRU01011"/>
    </source>
</evidence>
<evidence type="ECO:0000255" key="3">
    <source>
        <dbReference type="PROSITE-ProRule" id="PRU10095"/>
    </source>
</evidence>
<evidence type="ECO:0000256" key="4">
    <source>
        <dbReference type="SAM" id="MobiDB-lite"/>
    </source>
</evidence>
<evidence type="ECO:0000269" key="5">
    <source>
    </source>
</evidence>
<evidence type="ECO:0000269" key="6">
    <source>
    </source>
</evidence>
<evidence type="ECO:0000269" key="7">
    <source>
    </source>
</evidence>
<evidence type="ECO:0000269" key="8">
    <source>
    </source>
</evidence>
<evidence type="ECO:0000269" key="9">
    <source>
    </source>
</evidence>
<evidence type="ECO:0000269" key="10">
    <source>
    </source>
</evidence>
<evidence type="ECO:0000269" key="11">
    <source>
    </source>
</evidence>
<evidence type="ECO:0000269" key="12">
    <source>
    </source>
</evidence>
<evidence type="ECO:0000269" key="13">
    <source>
    </source>
</evidence>
<evidence type="ECO:0000269" key="14">
    <source>
    </source>
</evidence>
<evidence type="ECO:0000269" key="15">
    <source>
    </source>
</evidence>
<evidence type="ECO:0000303" key="16">
    <source>
    </source>
</evidence>
<evidence type="ECO:0000305" key="17"/>
<evidence type="ECO:0000305" key="18">
    <source>
    </source>
</evidence>
<evidence type="ECO:0000312" key="19">
    <source>
        <dbReference type="EMBL" id="AAX33360.1"/>
    </source>
</evidence>
<evidence type="ECO:0000312" key="20">
    <source>
        <dbReference type="EMBL" id="AGV77141.1"/>
    </source>
</evidence>
<evidence type="ECO:0000312" key="21">
    <source>
        <dbReference type="EMBL" id="CAC81969.1"/>
    </source>
</evidence>
<evidence type="ECO:0000312" key="22">
    <source>
        <dbReference type="FlyBase" id="FBgn0033438"/>
    </source>
</evidence>
<evidence type="ECO:0000312" key="23">
    <source>
        <dbReference type="Proteomes" id="UP000000803"/>
    </source>
</evidence>
<dbReference type="EC" id="3.4.24.-" evidence="17"/>
<dbReference type="EMBL" id="AJ289232">
    <property type="protein sequence ID" value="CAC81969.1"/>
    <property type="molecule type" value="mRNA"/>
</dbReference>
<dbReference type="EMBL" id="AE013599">
    <property type="protein sequence ID" value="AAF58911.6"/>
    <property type="molecule type" value="Genomic_DNA"/>
</dbReference>
<dbReference type="EMBL" id="AE013599">
    <property type="protein sequence ID" value="AAS64885.1"/>
    <property type="molecule type" value="Genomic_DNA"/>
</dbReference>
<dbReference type="EMBL" id="AE013599">
    <property type="protein sequence ID" value="AGB93363.1"/>
    <property type="molecule type" value="Genomic_DNA"/>
</dbReference>
<dbReference type="EMBL" id="BT021212">
    <property type="protein sequence ID" value="AAX33360.1"/>
    <property type="molecule type" value="mRNA"/>
</dbReference>
<dbReference type="EMBL" id="BT150239">
    <property type="protein sequence ID" value="AGV77141.1"/>
    <property type="molecule type" value="mRNA"/>
</dbReference>
<dbReference type="RefSeq" id="NP_001260830.1">
    <molecule id="Q8MPP3-2"/>
    <property type="nucleotide sequence ID" value="NM_001273901.1"/>
</dbReference>
<dbReference type="RefSeq" id="NP_610511.3">
    <molecule id="Q8MPP3-3"/>
    <property type="nucleotide sequence ID" value="NM_136667.3"/>
</dbReference>
<dbReference type="RefSeq" id="NP_995788.1">
    <molecule id="Q8MPP3-1"/>
    <property type="nucleotide sequence ID" value="NM_206066.3"/>
</dbReference>
<dbReference type="SMR" id="Q8MPP3"/>
<dbReference type="FunCoup" id="Q8MPP3">
    <property type="interactions" value="244"/>
</dbReference>
<dbReference type="STRING" id="7227.FBpp0087585"/>
<dbReference type="MEROPS" id="M10.036"/>
<dbReference type="PaxDb" id="7227-FBpp0087585"/>
<dbReference type="EnsemblMetazoa" id="FBtr0088501">
    <molecule id="Q8MPP3-1"/>
    <property type="protein sequence ID" value="FBpp0087585"/>
    <property type="gene ID" value="FBgn0033438"/>
</dbReference>
<dbReference type="EnsemblMetazoa" id="FBtr0334807">
    <molecule id="Q8MPP3-2"/>
    <property type="protein sequence ID" value="FBpp0306848"/>
    <property type="gene ID" value="FBgn0033438"/>
</dbReference>
<dbReference type="EnsemblMetazoa" id="FBtr0334808">
    <molecule id="Q8MPP3-3"/>
    <property type="protein sequence ID" value="FBpp0306849"/>
    <property type="gene ID" value="FBgn0033438"/>
</dbReference>
<dbReference type="GeneID" id="35997"/>
<dbReference type="KEGG" id="dme:Dmel_CG1794"/>
<dbReference type="UCSC" id="CG1794-RB">
    <molecule id="Q8MPP3-1"/>
    <property type="organism name" value="d. melanogaster"/>
</dbReference>
<dbReference type="AGR" id="FB:FBgn0033438"/>
<dbReference type="CTD" id="4313"/>
<dbReference type="FlyBase" id="FBgn0033438">
    <property type="gene designation" value="Mmp2"/>
</dbReference>
<dbReference type="VEuPathDB" id="VectorBase:FBgn0033438"/>
<dbReference type="eggNOG" id="KOG1565">
    <property type="taxonomic scope" value="Eukaryota"/>
</dbReference>
<dbReference type="InParanoid" id="Q8MPP3"/>
<dbReference type="OMA" id="DPRYPQD"/>
<dbReference type="OrthoDB" id="406838at2759"/>
<dbReference type="PhylomeDB" id="Q8MPP3"/>
<dbReference type="Reactome" id="R-DME-1442490">
    <property type="pathway name" value="Collagen degradation"/>
</dbReference>
<dbReference type="Reactome" id="R-DME-1474228">
    <property type="pathway name" value="Degradation of the extracellular matrix"/>
</dbReference>
<dbReference type="Reactome" id="R-DME-1592389">
    <property type="pathway name" value="Activation of Matrix Metalloproteinases"/>
</dbReference>
<dbReference type="Reactome" id="R-DME-210991">
    <property type="pathway name" value="Basigin interactions"/>
</dbReference>
<dbReference type="Reactome" id="R-DME-2168880">
    <property type="pathway name" value="Scavenging of heme from plasma"/>
</dbReference>
<dbReference type="Reactome" id="R-DME-2179392">
    <property type="pathway name" value="EGFR Transactivation by Gastrin"/>
</dbReference>
<dbReference type="Reactome" id="R-DME-3928665">
    <property type="pathway name" value="EPH-ephrin mediated repulsion of cells"/>
</dbReference>
<dbReference type="Reactome" id="R-DME-6798695">
    <property type="pathway name" value="Neutrophil degranulation"/>
</dbReference>
<dbReference type="BioGRID-ORCS" id="35997">
    <property type="hits" value="0 hits in 3 CRISPR screens"/>
</dbReference>
<dbReference type="ChiTaRS" id="Mmp2">
    <property type="organism name" value="fly"/>
</dbReference>
<dbReference type="GenomeRNAi" id="35997"/>
<dbReference type="PRO" id="PR:Q8MPP3"/>
<dbReference type="Proteomes" id="UP000000803">
    <property type="component" value="Chromosome 2R"/>
</dbReference>
<dbReference type="Bgee" id="FBgn0033438">
    <property type="expression patterns" value="Expressed in columnar neuron T1 (Drosophila) in insect head and 248 other cell types or tissues"/>
</dbReference>
<dbReference type="GO" id="GO:0030425">
    <property type="term" value="C:dendrite"/>
    <property type="evidence" value="ECO:0000315"/>
    <property type="project" value="FlyBase"/>
</dbReference>
<dbReference type="GO" id="GO:0009897">
    <property type="term" value="C:external side of plasma membrane"/>
    <property type="evidence" value="ECO:0000314"/>
    <property type="project" value="FlyBase"/>
</dbReference>
<dbReference type="GO" id="GO:0031012">
    <property type="term" value="C:extracellular matrix"/>
    <property type="evidence" value="ECO:0007669"/>
    <property type="project" value="InterPro"/>
</dbReference>
<dbReference type="GO" id="GO:0005615">
    <property type="term" value="C:extracellular space"/>
    <property type="evidence" value="ECO:0000314"/>
    <property type="project" value="FlyBase"/>
</dbReference>
<dbReference type="GO" id="GO:0005886">
    <property type="term" value="C:plasma membrane"/>
    <property type="evidence" value="ECO:0000314"/>
    <property type="project" value="FlyBase"/>
</dbReference>
<dbReference type="GO" id="GO:0004175">
    <property type="term" value="F:endopeptidase activity"/>
    <property type="evidence" value="ECO:0000314"/>
    <property type="project" value="FlyBase"/>
</dbReference>
<dbReference type="GO" id="GO:0004222">
    <property type="term" value="F:metalloendopeptidase activity"/>
    <property type="evidence" value="ECO:0000314"/>
    <property type="project" value="FlyBase"/>
</dbReference>
<dbReference type="GO" id="GO:0008270">
    <property type="term" value="F:zinc ion binding"/>
    <property type="evidence" value="ECO:0007669"/>
    <property type="project" value="InterPro"/>
</dbReference>
<dbReference type="GO" id="GO:0002218">
    <property type="term" value="P:activation of innate immune response"/>
    <property type="evidence" value="ECO:0000314"/>
    <property type="project" value="FlyBase"/>
</dbReference>
<dbReference type="GO" id="GO:0007505">
    <property type="term" value="P:adult fat body development"/>
    <property type="evidence" value="ECO:0000315"/>
    <property type="project" value="FlyBase"/>
</dbReference>
<dbReference type="GO" id="GO:0034769">
    <property type="term" value="P:basement membrane disassembly"/>
    <property type="evidence" value="ECO:0000315"/>
    <property type="project" value="FlyBase"/>
</dbReference>
<dbReference type="GO" id="GO:0071711">
    <property type="term" value="P:basement membrane organization"/>
    <property type="evidence" value="ECO:0000315"/>
    <property type="project" value="FlyBase"/>
</dbReference>
<dbReference type="GO" id="GO:0003319">
    <property type="term" value="P:cardioblast migration to the midline involved in heart rudiment formation"/>
    <property type="evidence" value="ECO:0000315"/>
    <property type="project" value="FlyBase"/>
</dbReference>
<dbReference type="GO" id="GO:0045216">
    <property type="term" value="P:cell-cell junction organization"/>
    <property type="evidence" value="ECO:0000315"/>
    <property type="project" value="FlyBase"/>
</dbReference>
<dbReference type="GO" id="GO:0030574">
    <property type="term" value="P:collagen catabolic process"/>
    <property type="evidence" value="ECO:0000318"/>
    <property type="project" value="GO_Central"/>
</dbReference>
<dbReference type="GO" id="GO:0003144">
    <property type="term" value="P:embryonic heart tube formation"/>
    <property type="evidence" value="ECO:0000315"/>
    <property type="project" value="FlyBase"/>
</dbReference>
<dbReference type="GO" id="GO:0030198">
    <property type="term" value="P:extracellular matrix organization"/>
    <property type="evidence" value="ECO:0000318"/>
    <property type="project" value="GO_Central"/>
</dbReference>
<dbReference type="GO" id="GO:0097156">
    <property type="term" value="P:fasciculation of motor neuron axon"/>
    <property type="evidence" value="ECO:0000315"/>
    <property type="project" value="FlyBase"/>
</dbReference>
<dbReference type="GO" id="GO:0007561">
    <property type="term" value="P:imaginal disc eversion"/>
    <property type="evidence" value="ECO:0000315"/>
    <property type="project" value="FlyBase"/>
</dbReference>
<dbReference type="GO" id="GO:0046529">
    <property type="term" value="P:imaginal disc fusion, thorax closure"/>
    <property type="evidence" value="ECO:0000315"/>
    <property type="project" value="FlyBase"/>
</dbReference>
<dbReference type="GO" id="GO:0046331">
    <property type="term" value="P:lateral inhibition"/>
    <property type="evidence" value="ECO:0000315"/>
    <property type="project" value="FlyBase"/>
</dbReference>
<dbReference type="GO" id="GO:0008045">
    <property type="term" value="P:motor neuron axon guidance"/>
    <property type="evidence" value="ECO:0000315"/>
    <property type="project" value="FlyBase"/>
</dbReference>
<dbReference type="GO" id="GO:0090090">
    <property type="term" value="P:negative regulation of canonical Wnt signaling pathway"/>
    <property type="evidence" value="ECO:0000316"/>
    <property type="project" value="FlyBase"/>
</dbReference>
<dbReference type="GO" id="GO:1901202">
    <property type="term" value="P:negative regulation of extracellular matrix assembly"/>
    <property type="evidence" value="ECO:0000315"/>
    <property type="project" value="FlyBase"/>
</dbReference>
<dbReference type="GO" id="GO:0040037">
    <property type="term" value="P:negative regulation of fibroblast growth factor receptor signaling pathway"/>
    <property type="evidence" value="ECO:0000314"/>
    <property type="project" value="FlyBase"/>
</dbReference>
<dbReference type="GO" id="GO:2000647">
    <property type="term" value="P:negative regulation of stem cell proliferation"/>
    <property type="evidence" value="ECO:0000315"/>
    <property type="project" value="FlyBase"/>
</dbReference>
<dbReference type="GO" id="GO:0007424">
    <property type="term" value="P:open tracheal system development"/>
    <property type="evidence" value="ECO:0000315"/>
    <property type="project" value="FlyBase"/>
</dbReference>
<dbReference type="GO" id="GO:0030728">
    <property type="term" value="P:ovulation"/>
    <property type="evidence" value="ECO:0000315"/>
    <property type="project" value="FlyBase"/>
</dbReference>
<dbReference type="GO" id="GO:0016485">
    <property type="term" value="P:protein processing"/>
    <property type="evidence" value="ECO:0000315"/>
    <property type="project" value="FlyBase"/>
</dbReference>
<dbReference type="GO" id="GO:0006929">
    <property type="term" value="P:substrate-dependent cell migration"/>
    <property type="evidence" value="ECO:0000315"/>
    <property type="project" value="FlyBase"/>
</dbReference>
<dbReference type="GO" id="GO:0007426">
    <property type="term" value="P:tracheal outgrowth, open tracheal system"/>
    <property type="evidence" value="ECO:0000315"/>
    <property type="project" value="FlyBase"/>
</dbReference>
<dbReference type="GO" id="GO:0035202">
    <property type="term" value="P:tracheal pit formation in open tracheal system"/>
    <property type="evidence" value="ECO:0000315"/>
    <property type="project" value="FlyBase"/>
</dbReference>
<dbReference type="GO" id="GO:0007419">
    <property type="term" value="P:ventral cord development"/>
    <property type="evidence" value="ECO:0000315"/>
    <property type="project" value="FlyBase"/>
</dbReference>
<dbReference type="GO" id="GO:0042060">
    <property type="term" value="P:wound healing"/>
    <property type="evidence" value="ECO:0000315"/>
    <property type="project" value="FlyBase"/>
</dbReference>
<dbReference type="CDD" id="cd00094">
    <property type="entry name" value="HX"/>
    <property type="match status" value="1"/>
</dbReference>
<dbReference type="CDD" id="cd04278">
    <property type="entry name" value="ZnMc_MMP"/>
    <property type="match status" value="1"/>
</dbReference>
<dbReference type="FunFam" id="2.110.10.10:FF:000018">
    <property type="entry name" value="Matrix metallopeptidase 25b"/>
    <property type="match status" value="1"/>
</dbReference>
<dbReference type="Gene3D" id="3.40.390.10">
    <property type="entry name" value="Collagenase (Catalytic Domain)"/>
    <property type="match status" value="1"/>
</dbReference>
<dbReference type="Gene3D" id="2.110.10.10">
    <property type="entry name" value="Hemopexin-like domain"/>
    <property type="match status" value="1"/>
</dbReference>
<dbReference type="InterPro" id="IPR000585">
    <property type="entry name" value="Hemopexin-like_dom"/>
</dbReference>
<dbReference type="InterPro" id="IPR036375">
    <property type="entry name" value="Hemopexin-like_dom_sf"/>
</dbReference>
<dbReference type="InterPro" id="IPR018487">
    <property type="entry name" value="Hemopexin-like_repeat"/>
</dbReference>
<dbReference type="InterPro" id="IPR033739">
    <property type="entry name" value="M10A_MMP"/>
</dbReference>
<dbReference type="InterPro" id="IPR024079">
    <property type="entry name" value="MetalloPept_cat_dom_sf"/>
</dbReference>
<dbReference type="InterPro" id="IPR001818">
    <property type="entry name" value="Pept_M10_metallopeptidase"/>
</dbReference>
<dbReference type="InterPro" id="IPR021190">
    <property type="entry name" value="Pept_M10A"/>
</dbReference>
<dbReference type="InterPro" id="IPR006026">
    <property type="entry name" value="Peptidase_Metallo"/>
</dbReference>
<dbReference type="InterPro" id="IPR036365">
    <property type="entry name" value="PGBD-like_sf"/>
</dbReference>
<dbReference type="PANTHER" id="PTHR10201">
    <property type="entry name" value="MATRIX METALLOPROTEINASE"/>
    <property type="match status" value="1"/>
</dbReference>
<dbReference type="PANTHER" id="PTHR10201:SF291">
    <property type="entry name" value="MATRIX METALLOPROTEINASE 1, ISOFORM C-RELATED"/>
    <property type="match status" value="1"/>
</dbReference>
<dbReference type="Pfam" id="PF00045">
    <property type="entry name" value="Hemopexin"/>
    <property type="match status" value="4"/>
</dbReference>
<dbReference type="Pfam" id="PF00413">
    <property type="entry name" value="Peptidase_M10"/>
    <property type="match status" value="1"/>
</dbReference>
<dbReference type="PRINTS" id="PR00138">
    <property type="entry name" value="MATRIXIN"/>
</dbReference>
<dbReference type="SMART" id="SM00120">
    <property type="entry name" value="HX"/>
    <property type="match status" value="4"/>
</dbReference>
<dbReference type="SMART" id="SM00235">
    <property type="entry name" value="ZnMc"/>
    <property type="match status" value="1"/>
</dbReference>
<dbReference type="SUPFAM" id="SSF50923">
    <property type="entry name" value="Hemopexin-like domain"/>
    <property type="match status" value="1"/>
</dbReference>
<dbReference type="SUPFAM" id="SSF55486">
    <property type="entry name" value="Metalloproteases ('zincins'), catalytic domain"/>
    <property type="match status" value="1"/>
</dbReference>
<dbReference type="SUPFAM" id="SSF47090">
    <property type="entry name" value="PGBD-like"/>
    <property type="match status" value="1"/>
</dbReference>
<dbReference type="PROSITE" id="PS51642">
    <property type="entry name" value="HEMOPEXIN_2"/>
    <property type="match status" value="4"/>
</dbReference>
<dbReference type="PROSITE" id="PS00142">
    <property type="entry name" value="ZINC_PROTEASE"/>
    <property type="match status" value="1"/>
</dbReference>
<keyword id="KW-0025">Alternative splicing</keyword>
<keyword id="KW-0106">Calcium</keyword>
<keyword id="KW-1003">Cell membrane</keyword>
<keyword id="KW-0165">Cleavage on pair of basic residues</keyword>
<keyword id="KW-1015">Disulfide bond</keyword>
<keyword id="KW-0378">Hydrolase</keyword>
<keyword id="KW-0472">Membrane</keyword>
<keyword id="KW-0479">Metal-binding</keyword>
<keyword id="KW-0482">Metalloprotease</keyword>
<keyword id="KW-0645">Protease</keyword>
<keyword id="KW-1185">Reference proteome</keyword>
<keyword id="KW-0677">Repeat</keyword>
<keyword id="KW-0732">Signal</keyword>
<keyword id="KW-0812">Transmembrane</keyword>
<keyword id="KW-1133">Transmembrane helix</keyword>
<keyword id="KW-0862">Zinc</keyword>
<keyword id="KW-0865">Zymogen</keyword>
<accession>Q8MPP3</accession>
<accession>A0A0B4KFG9</accession>
<accession>A0A0C4DHC9</accession>
<accession>Q5BIL2</accession>
<protein>
    <recommendedName>
        <fullName evidence="16">Matrix metalloproteinase-2</fullName>
        <shortName evidence="16">Dm2-MMP</shortName>
        <ecNumber evidence="17">3.4.24.-</ecNumber>
    </recommendedName>
</protein>
<sequence length="758" mass="89137">MFSKYVLATLLALFAQSMCIQELSLPPEGSHSTAATRSKKAKTAISEDIMYNYLMQFDYLPKSDLETGALRTEDQLKEAIRSLQSFGNITVTGEIDSATARLIQKPRCGVGDRRSADSFSPDNLYHEIGSNVRVRRFALQGPKWSRTDLTWSMVNRSMPDASKVERMVQTALDVWANHSKLTFREVYSDQADIQILFARRAHGDGYKFDGPGQVLAHAFYPGEGRGGDAHFDADETWNFDGESDDSHGTNFLNVALHELGHSLGLAHSAIPDAVMFPWYQNNEVAGNLPDDDRYGIQQLYGTKEKTWGPYKPQTTTTTTTTTTMRAMIYRADKPAYWPWNNPSNNPNNDRNRARERQEEERRRQEKERRRQEEERRHQEEERRRQVEERQRQEEERWRQEQERQEEENRRRKIEHKSQWERNPSKERNRPRERQEMERRRQEQERQEQERQEQEDRRRERERDRQLEWERRNRNGAREPVTPTANTTPRPTNKPYPTVHRQHHHHNKPRKPKPDSCMTYYDAISIIRGELFIFRGPYLWRIGTSGLYNGYPTEIRRHWSALPENLTKVDAVYENKQRQIVFFIGREYYVFNSVMLAPGFPKPLASLGLPPTLTHIDASFVWGHNNRTYMTSGTLYWRIDDYTGQVELDYPRDMSIWSGVGYNIDAAFQYLDGKTYFFKNLGYWEFNDDRMKVAHARAKLSARRWMQCARSANEVDDEQRWTASLVSEGEETGRSGSRELRINHFILSILLLAIANWRS</sequence>
<gene>
    <name evidence="22" type="primary">Mmp2</name>
    <name evidence="22" type="ORF">CG1794</name>
</gene>
<proteinExistence type="evidence at protein level"/>
<organism evidence="21">
    <name type="scientific">Drosophila melanogaster</name>
    <name type="common">Fruit fly</name>
    <dbReference type="NCBI Taxonomy" id="7227"/>
    <lineage>
        <taxon>Eukaryota</taxon>
        <taxon>Metazoa</taxon>
        <taxon>Ecdysozoa</taxon>
        <taxon>Arthropoda</taxon>
        <taxon>Hexapoda</taxon>
        <taxon>Insecta</taxon>
        <taxon>Pterygota</taxon>
        <taxon>Neoptera</taxon>
        <taxon>Endopterygota</taxon>
        <taxon>Diptera</taxon>
        <taxon>Brachycera</taxon>
        <taxon>Muscomorpha</taxon>
        <taxon>Ephydroidea</taxon>
        <taxon>Drosophilidae</taxon>
        <taxon>Drosophila</taxon>
        <taxon>Sophophora</taxon>
    </lineage>
</organism>
<feature type="signal peptide" evidence="1">
    <location>
        <begin position="1"/>
        <end position="17"/>
    </location>
</feature>
<feature type="propeptide" id="PRO_0000434511" description="Activation peptide" evidence="17">
    <location>
        <begin position="18"/>
        <end status="unknown"/>
    </location>
</feature>
<feature type="chain" id="PRO_0000434512" description="Matrix metalloproteinase-2" evidence="17">
    <location>
        <begin status="unknown"/>
        <end position="758"/>
    </location>
</feature>
<feature type="topological domain" description="Extracellular" evidence="1">
    <location>
        <begin status="unknown"/>
        <end position="738"/>
    </location>
</feature>
<feature type="transmembrane region" description="Helical" evidence="1">
    <location>
        <begin position="739"/>
        <end position="756"/>
    </location>
</feature>
<feature type="topological domain" description="Cytoplasmic" evidence="1">
    <location>
        <begin position="757"/>
        <end position="758"/>
    </location>
</feature>
<feature type="repeat" description="Hemopexin 1" evidence="2">
    <location>
        <begin position="513"/>
        <end position="561"/>
    </location>
</feature>
<feature type="repeat" description="Hemopexin 2" evidence="2">
    <location>
        <begin position="565"/>
        <end position="610"/>
    </location>
</feature>
<feature type="repeat" description="Hemopexin 3" evidence="2">
    <location>
        <begin position="612"/>
        <end position="659"/>
    </location>
</feature>
<feature type="repeat" description="Hemopexin 4" evidence="2">
    <location>
        <begin position="660"/>
        <end position="707"/>
    </location>
</feature>
<feature type="region of interest" description="Disordered" evidence="4">
    <location>
        <begin position="335"/>
        <end position="514"/>
    </location>
</feature>
<feature type="compositionally biased region" description="Low complexity" evidence="4">
    <location>
        <begin position="338"/>
        <end position="348"/>
    </location>
</feature>
<feature type="compositionally biased region" description="Basic and acidic residues" evidence="4">
    <location>
        <begin position="349"/>
        <end position="476"/>
    </location>
</feature>
<feature type="compositionally biased region" description="Low complexity" evidence="4">
    <location>
        <begin position="479"/>
        <end position="494"/>
    </location>
</feature>
<feature type="compositionally biased region" description="Basic residues" evidence="4">
    <location>
        <begin position="499"/>
        <end position="510"/>
    </location>
</feature>
<feature type="active site" evidence="3">
    <location>
        <position position="258"/>
    </location>
</feature>
<feature type="binding site" evidence="3">
    <location>
        <position position="257"/>
    </location>
    <ligand>
        <name>Zn(2+)</name>
        <dbReference type="ChEBI" id="CHEBI:29105"/>
        <note>catalytic</note>
    </ligand>
</feature>
<feature type="binding site" evidence="3">
    <location>
        <position position="261"/>
    </location>
    <ligand>
        <name>Zn(2+)</name>
        <dbReference type="ChEBI" id="CHEBI:29105"/>
        <note>catalytic</note>
    </ligand>
</feature>
<feature type="binding site" evidence="3">
    <location>
        <position position="267"/>
    </location>
    <ligand>
        <name>Zn(2+)</name>
        <dbReference type="ChEBI" id="CHEBI:29105"/>
        <note>catalytic</note>
    </ligand>
</feature>
<feature type="disulfide bond" evidence="17">
    <location>
        <begin position="516"/>
        <end position="707"/>
    </location>
</feature>
<feature type="splice variant" id="VSP_057940" description="In isoform C.">
    <location>
        <begin position="1"/>
        <end position="152"/>
    </location>
</feature>
<feature type="splice variant" id="VSP_057941" description="In isoform D.">
    <original>MFSKYVLATLLALFAQSMCIQELSLPPEGSHSTAATRSKKAKTAISEDIMYNYLMQFDYLPKSDLETGALRTEDQLKEAIRSLQSFGNITVTGEIDSATARLIQKPRCGVGDRRSADSFSPDNLYHEIGSNVRVRRFALQGPKWSRTDLTWS</original>
    <variation>MLSLWPRRQFSAAAVLLHFGCTWSLVLATRLAVISWRLFLCFLR</variation>
    <location>
        <begin position="1"/>
        <end position="152"/>
    </location>
</feature>
<feature type="mutagenesis site" description="Probably enzymatically dead. Delayed fat body dissociation during metamorphosis in vivo, probably due to reduced cleavage efficiency of basement membranes. Reduced GFIC-mediated systemic imd/Relish response to Gram-negative bacterial infection." evidence="13 15">
    <original>A</original>
    <variation>V</variation>
    <location>
        <position position="218"/>
    </location>
</feature>
<feature type="sequence conflict" description="In Ref. 4; AAX33360." evidence="17" ref="4">
    <original>T</original>
    <variation>N</variation>
    <location>
        <position position="43"/>
    </location>
</feature>
<feature type="sequence conflict" description="In Ref. 4; AAX33360." evidence="17" ref="4">
    <original>K</original>
    <variation>E</variation>
    <location>
        <position position="412"/>
    </location>
</feature>
<reference evidence="21" key="1">
    <citation type="journal article" date="2002" name="J. Biol. Chem.">
        <title>Structural and enzymatic characterization of Drosophila Dm2-MMP, a membrane-bound matrix metalloproteinase with tissue-specific expression.</title>
        <authorList>
            <person name="Llano E."/>
            <person name="Adam G."/>
            <person name="Pendas A.M."/>
            <person name="Quesada V."/>
            <person name="Sanchez L.M."/>
            <person name="Santamaria I."/>
            <person name="Noselli S."/>
            <person name="Lopez-Otin C."/>
        </authorList>
    </citation>
    <scope>NUCLEOTIDE SEQUENCE [MRNA]</scope>
    <scope>FUNCTION</scope>
    <scope>COFACTOR</scope>
    <scope>SUBCELLULAR LOCATION</scope>
    <scope>TISSUE SPECIFICITY</scope>
    <scope>DEVELOPMENTAL STAGE</scope>
</reference>
<reference evidence="23" key="2">
    <citation type="journal article" date="2000" name="Science">
        <title>The genome sequence of Drosophila melanogaster.</title>
        <authorList>
            <person name="Adams M.D."/>
            <person name="Celniker S.E."/>
            <person name="Holt R.A."/>
            <person name="Evans C.A."/>
            <person name="Gocayne J.D."/>
            <person name="Amanatides P.G."/>
            <person name="Scherer S.E."/>
            <person name="Li P.W."/>
            <person name="Hoskins R.A."/>
            <person name="Galle R.F."/>
            <person name="George R.A."/>
            <person name="Lewis S.E."/>
            <person name="Richards S."/>
            <person name="Ashburner M."/>
            <person name="Henderson S.N."/>
            <person name="Sutton G.G."/>
            <person name="Wortman J.R."/>
            <person name="Yandell M.D."/>
            <person name="Zhang Q."/>
            <person name="Chen L.X."/>
            <person name="Brandon R.C."/>
            <person name="Rogers Y.-H.C."/>
            <person name="Blazej R.G."/>
            <person name="Champe M."/>
            <person name="Pfeiffer B.D."/>
            <person name="Wan K.H."/>
            <person name="Doyle C."/>
            <person name="Baxter E.G."/>
            <person name="Helt G."/>
            <person name="Nelson C.R."/>
            <person name="Miklos G.L.G."/>
            <person name="Abril J.F."/>
            <person name="Agbayani A."/>
            <person name="An H.-J."/>
            <person name="Andrews-Pfannkoch C."/>
            <person name="Baldwin D."/>
            <person name="Ballew R.M."/>
            <person name="Basu A."/>
            <person name="Baxendale J."/>
            <person name="Bayraktaroglu L."/>
            <person name="Beasley E.M."/>
            <person name="Beeson K.Y."/>
            <person name="Benos P.V."/>
            <person name="Berman B.P."/>
            <person name="Bhandari D."/>
            <person name="Bolshakov S."/>
            <person name="Borkova D."/>
            <person name="Botchan M.R."/>
            <person name="Bouck J."/>
            <person name="Brokstein P."/>
            <person name="Brottier P."/>
            <person name="Burtis K.C."/>
            <person name="Busam D.A."/>
            <person name="Butler H."/>
            <person name="Cadieu E."/>
            <person name="Center A."/>
            <person name="Chandra I."/>
            <person name="Cherry J.M."/>
            <person name="Cawley S."/>
            <person name="Dahlke C."/>
            <person name="Davenport L.B."/>
            <person name="Davies P."/>
            <person name="de Pablos B."/>
            <person name="Delcher A."/>
            <person name="Deng Z."/>
            <person name="Mays A.D."/>
            <person name="Dew I."/>
            <person name="Dietz S.M."/>
            <person name="Dodson K."/>
            <person name="Doup L.E."/>
            <person name="Downes M."/>
            <person name="Dugan-Rocha S."/>
            <person name="Dunkov B.C."/>
            <person name="Dunn P."/>
            <person name="Durbin K.J."/>
            <person name="Evangelista C.C."/>
            <person name="Ferraz C."/>
            <person name="Ferriera S."/>
            <person name="Fleischmann W."/>
            <person name="Fosler C."/>
            <person name="Gabrielian A.E."/>
            <person name="Garg N.S."/>
            <person name="Gelbart W.M."/>
            <person name="Glasser K."/>
            <person name="Glodek A."/>
            <person name="Gong F."/>
            <person name="Gorrell J.H."/>
            <person name="Gu Z."/>
            <person name="Guan P."/>
            <person name="Harris M."/>
            <person name="Harris N.L."/>
            <person name="Harvey D.A."/>
            <person name="Heiman T.J."/>
            <person name="Hernandez J.R."/>
            <person name="Houck J."/>
            <person name="Hostin D."/>
            <person name="Houston K.A."/>
            <person name="Howland T.J."/>
            <person name="Wei M.-H."/>
            <person name="Ibegwam C."/>
            <person name="Jalali M."/>
            <person name="Kalush F."/>
            <person name="Karpen G.H."/>
            <person name="Ke Z."/>
            <person name="Kennison J.A."/>
            <person name="Ketchum K.A."/>
            <person name="Kimmel B.E."/>
            <person name="Kodira C.D."/>
            <person name="Kraft C.L."/>
            <person name="Kravitz S."/>
            <person name="Kulp D."/>
            <person name="Lai Z."/>
            <person name="Lasko P."/>
            <person name="Lei Y."/>
            <person name="Levitsky A.A."/>
            <person name="Li J.H."/>
            <person name="Li Z."/>
            <person name="Liang Y."/>
            <person name="Lin X."/>
            <person name="Liu X."/>
            <person name="Mattei B."/>
            <person name="McIntosh T.C."/>
            <person name="McLeod M.P."/>
            <person name="McPherson D."/>
            <person name="Merkulov G."/>
            <person name="Milshina N.V."/>
            <person name="Mobarry C."/>
            <person name="Morris J."/>
            <person name="Moshrefi A."/>
            <person name="Mount S.M."/>
            <person name="Moy M."/>
            <person name="Murphy B."/>
            <person name="Murphy L."/>
            <person name="Muzny D.M."/>
            <person name="Nelson D.L."/>
            <person name="Nelson D.R."/>
            <person name="Nelson K.A."/>
            <person name="Nixon K."/>
            <person name="Nusskern D.R."/>
            <person name="Pacleb J.M."/>
            <person name="Palazzolo M."/>
            <person name="Pittman G.S."/>
            <person name="Pan S."/>
            <person name="Pollard J."/>
            <person name="Puri V."/>
            <person name="Reese M.G."/>
            <person name="Reinert K."/>
            <person name="Remington K."/>
            <person name="Saunders R.D.C."/>
            <person name="Scheeler F."/>
            <person name="Shen H."/>
            <person name="Shue B.C."/>
            <person name="Siden-Kiamos I."/>
            <person name="Simpson M."/>
            <person name="Skupski M.P."/>
            <person name="Smith T.J."/>
            <person name="Spier E."/>
            <person name="Spradling A.C."/>
            <person name="Stapleton M."/>
            <person name="Strong R."/>
            <person name="Sun E."/>
            <person name="Svirskas R."/>
            <person name="Tector C."/>
            <person name="Turner R."/>
            <person name="Venter E."/>
            <person name="Wang A.H."/>
            <person name="Wang X."/>
            <person name="Wang Z.-Y."/>
            <person name="Wassarman D.A."/>
            <person name="Weinstock G.M."/>
            <person name="Weissenbach J."/>
            <person name="Williams S.M."/>
            <person name="Woodage T."/>
            <person name="Worley K.C."/>
            <person name="Wu D."/>
            <person name="Yang S."/>
            <person name="Yao Q.A."/>
            <person name="Ye J."/>
            <person name="Yeh R.-F."/>
            <person name="Zaveri J.S."/>
            <person name="Zhan M."/>
            <person name="Zhang G."/>
            <person name="Zhao Q."/>
            <person name="Zheng L."/>
            <person name="Zheng X.H."/>
            <person name="Zhong F.N."/>
            <person name="Zhong W."/>
            <person name="Zhou X."/>
            <person name="Zhu S.C."/>
            <person name="Zhu X."/>
            <person name="Smith H.O."/>
            <person name="Gibbs R.A."/>
            <person name="Myers E.W."/>
            <person name="Rubin G.M."/>
            <person name="Venter J.C."/>
        </authorList>
    </citation>
    <scope>NUCLEOTIDE SEQUENCE [LARGE SCALE GENOMIC DNA]</scope>
    <source>
        <strain evidence="23">Berkeley</strain>
    </source>
</reference>
<reference evidence="23" key="3">
    <citation type="journal article" date="2002" name="Genome Biol.">
        <title>Annotation of the Drosophila melanogaster euchromatic genome: a systematic review.</title>
        <authorList>
            <person name="Misra S."/>
            <person name="Crosby M.A."/>
            <person name="Mungall C.J."/>
            <person name="Matthews B.B."/>
            <person name="Campbell K.S."/>
            <person name="Hradecky P."/>
            <person name="Huang Y."/>
            <person name="Kaminker J.S."/>
            <person name="Millburn G.H."/>
            <person name="Prochnik S.E."/>
            <person name="Smith C.D."/>
            <person name="Tupy J.L."/>
            <person name="Whitfield E.J."/>
            <person name="Bayraktaroglu L."/>
            <person name="Berman B.P."/>
            <person name="Bettencourt B.R."/>
            <person name="Celniker S.E."/>
            <person name="de Grey A.D.N.J."/>
            <person name="Drysdale R.A."/>
            <person name="Harris N.L."/>
            <person name="Richter J."/>
            <person name="Russo S."/>
            <person name="Schroeder A.J."/>
            <person name="Shu S.Q."/>
            <person name="Stapleton M."/>
            <person name="Yamada C."/>
            <person name="Ashburner M."/>
            <person name="Gelbart W.M."/>
            <person name="Rubin G.M."/>
            <person name="Lewis S.E."/>
        </authorList>
    </citation>
    <scope>GENOME REANNOTATION</scope>
    <source>
        <strain evidence="23">Berkeley</strain>
    </source>
</reference>
<reference evidence="19 20" key="4">
    <citation type="submission" date="2013-09" db="EMBL/GenBank/DDBJ databases">
        <authorList>
            <person name="Carlson J."/>
            <person name="Booth B."/>
            <person name="Frise E."/>
            <person name="Park S."/>
            <person name="Wan K."/>
            <person name="Yu C."/>
            <person name="Celniker S."/>
        </authorList>
    </citation>
    <scope>NUCLEOTIDE SEQUENCE [LARGE SCALE MRNA]</scope>
</reference>
<reference evidence="17" key="5">
    <citation type="journal article" date="2003" name="Dev. Cell">
        <title>Drosophila matrix metalloproteinases are required for tissue remodeling, but not embryonic development.</title>
        <authorList>
            <person name="Page-McCaw A."/>
            <person name="Serano J."/>
            <person name="Sante J.M."/>
            <person name="Rubin G.M."/>
        </authorList>
    </citation>
    <scope>FUNCTION</scope>
    <scope>TISSUE SPECIFICITY</scope>
    <scope>DEVELOPMENTAL STAGE</scope>
    <scope>DISRUPTION PHENOTYPE</scope>
</reference>
<reference evidence="17" key="6">
    <citation type="journal article" date="2008" name="Development">
        <title>Matrix metalloproteinases promote motor axon fasciculation in the Drosophila embryo.</title>
        <authorList>
            <person name="Miller C.M."/>
            <person name="Page-McCaw A."/>
            <person name="Broihier H.T."/>
        </authorList>
    </citation>
    <scope>FUNCTION</scope>
    <scope>TISSUE SPECIFICITY</scope>
    <scope>DISRUPTION PHENOTYPE</scope>
</reference>
<reference evidence="17" key="7">
    <citation type="journal article" date="2009" name="Dev. Biol.">
        <title>Regulation of Drosophila matrix metalloprotease Mmp2 is essential for wing imaginal disc:trachea association and air sac tubulogenesis.</title>
        <authorList>
            <person name="Guha A."/>
            <person name="Lin L."/>
            <person name="Kornberg T.B."/>
        </authorList>
    </citation>
    <scope>FUNCTION</scope>
</reference>
<reference evidence="17" key="8">
    <citation type="journal article" date="2010" name="Dev. Cell">
        <title>Dendrite reshaping of adult Drosophila sensory neurons requires matrix metalloproteinase-mediated modification of the basement membranes.</title>
        <authorList>
            <person name="Yasunaga K."/>
            <person name="Kanamori T."/>
            <person name="Morikawa R."/>
            <person name="Suzuki E."/>
            <person name="Emoto K."/>
        </authorList>
    </citation>
    <scope>FUNCTION</scope>
    <scope>DEVELOPMENTAL STAGE</scope>
</reference>
<reference evidence="17" key="9">
    <citation type="journal article" date="2011" name="J. Neurosci.">
        <title>Drosophila MMP2 regulates the matrix molecule faulty attraction (Frac) to promote motor axon targeting in Drosophila.</title>
        <authorList>
            <person name="Miller C.M."/>
            <person name="Liu N."/>
            <person name="Page-McCaw A."/>
            <person name="Broihier H.T."/>
        </authorList>
    </citation>
    <scope>FUNCTION</scope>
</reference>
<reference key="10">
    <citation type="journal article" date="2011" name="Self/Nonself">
        <title>Cleavage of PGRP-LC receptor in the Drosophila IMD pathway in response to live bacterial infection in S2 cells.</title>
        <authorList>
            <person name="Schmidt R.L."/>
            <person name="Rinaldo F.M."/>
            <person name="Hesse S.E."/>
            <person name="Hamada M."/>
            <person name="Ortiz Z."/>
            <person name="Beleford D.T."/>
            <person name="Page-McCaw A."/>
            <person name="Platt J.L."/>
            <person name="Tang A.H."/>
        </authorList>
    </citation>
    <scope>FUNCTION</scope>
</reference>
<reference evidence="17" key="11">
    <citation type="journal article" date="2012" name="Mol. Biol. Cell">
        <title>A secreted MMP is required for reepithelialization during wound healing.</title>
        <authorList>
            <person name="Stevens L.J."/>
            <person name="Page-McCaw A."/>
        </authorList>
    </citation>
    <scope>FUNCTION</scope>
</reference>
<reference evidence="17" key="12">
    <citation type="journal article" date="2014" name="J. Cell Biol.">
        <title>A matrix metalloproteinase mediates long-distance attenuation of stem cell proliferation.</title>
        <authorList>
            <person name="Wang X."/>
            <person name="Page-McCaw A."/>
        </authorList>
    </citation>
    <scope>FUNCTION</scope>
    <scope>SUBCELLULAR LOCATION</scope>
</reference>
<reference evidence="17" key="13">
    <citation type="journal article" date="2014" name="Sci. Rep.">
        <title>Mmp1 and Mmp2 cooperatively induce Drosophila fat body cell dissociation with distinct roles.</title>
        <authorList>
            <person name="Jia Q."/>
            <person name="Liu Y."/>
            <person name="Liu H."/>
            <person name="Li S."/>
        </authorList>
    </citation>
    <scope>FUNCTION</scope>
    <scope>MUTAGENESIS OF ALA-218</scope>
</reference>
<reference evidence="17" key="14">
    <citation type="journal article" date="2015" name="PLoS Genet.">
        <title>Matrix metalloproteinase 2 is required for ovulation and corpus luteum formation in Drosophila.</title>
        <authorList>
            <person name="Deady L.D."/>
            <person name="Shen W."/>
            <person name="Mosure S.A."/>
            <person name="Spradling A.C."/>
            <person name="Sun J."/>
        </authorList>
    </citation>
    <scope>FUNCTION</scope>
    <scope>TISSUE SPECIFICITY</scope>
</reference>
<reference key="15">
    <citation type="journal article" date="2019" name="Cell Host Microbe">
        <title>Sugar Alcohols of Polyol Pathway Serve as Alarmins to Mediate Local-Systemic Innate Immune Communication in Drosophila.</title>
        <authorList>
            <person name="Yang S."/>
            <person name="Zhao Y."/>
            <person name="Yu J."/>
            <person name="Fan Z."/>
            <person name="Gong S.T."/>
            <person name="Tang H."/>
            <person name="Pan L."/>
        </authorList>
    </citation>
    <scope>FUNCTION</scope>
    <scope>INDUCTION BY SORBITOL AND GALACTITOL</scope>
    <scope>DISRUPTION PHENOTYPE</scope>
    <scope>MUTAGENESIS OF ALA-218</scope>
</reference>